<dbReference type="EMBL" id="CP001287">
    <property type="protein sequence ID" value="ACK64328.1"/>
    <property type="molecule type" value="Genomic_DNA"/>
</dbReference>
<dbReference type="RefSeq" id="WP_012593605.1">
    <property type="nucleotide sequence ID" value="NC_011726.1"/>
</dbReference>
<dbReference type="SMR" id="B7K221"/>
<dbReference type="STRING" id="41431.PCC8801_0225"/>
<dbReference type="KEGG" id="cyp:PCC8801_0225"/>
<dbReference type="eggNOG" id="COG0102">
    <property type="taxonomic scope" value="Bacteria"/>
</dbReference>
<dbReference type="HOGENOM" id="CLU_082184_2_2_3"/>
<dbReference type="OrthoDB" id="9801330at2"/>
<dbReference type="Proteomes" id="UP000008204">
    <property type="component" value="Chromosome"/>
</dbReference>
<dbReference type="GO" id="GO:0022625">
    <property type="term" value="C:cytosolic large ribosomal subunit"/>
    <property type="evidence" value="ECO:0007669"/>
    <property type="project" value="TreeGrafter"/>
</dbReference>
<dbReference type="GO" id="GO:0003729">
    <property type="term" value="F:mRNA binding"/>
    <property type="evidence" value="ECO:0007669"/>
    <property type="project" value="TreeGrafter"/>
</dbReference>
<dbReference type="GO" id="GO:0003735">
    <property type="term" value="F:structural constituent of ribosome"/>
    <property type="evidence" value="ECO:0007669"/>
    <property type="project" value="InterPro"/>
</dbReference>
<dbReference type="GO" id="GO:0017148">
    <property type="term" value="P:negative regulation of translation"/>
    <property type="evidence" value="ECO:0007669"/>
    <property type="project" value="TreeGrafter"/>
</dbReference>
<dbReference type="GO" id="GO:0006412">
    <property type="term" value="P:translation"/>
    <property type="evidence" value="ECO:0007669"/>
    <property type="project" value="UniProtKB-UniRule"/>
</dbReference>
<dbReference type="CDD" id="cd00392">
    <property type="entry name" value="Ribosomal_L13"/>
    <property type="match status" value="1"/>
</dbReference>
<dbReference type="FunFam" id="3.90.1180.10:FF:000001">
    <property type="entry name" value="50S ribosomal protein L13"/>
    <property type="match status" value="1"/>
</dbReference>
<dbReference type="Gene3D" id="3.90.1180.10">
    <property type="entry name" value="Ribosomal protein L13"/>
    <property type="match status" value="1"/>
</dbReference>
<dbReference type="HAMAP" id="MF_01366">
    <property type="entry name" value="Ribosomal_uL13"/>
    <property type="match status" value="1"/>
</dbReference>
<dbReference type="InterPro" id="IPR005822">
    <property type="entry name" value="Ribosomal_uL13"/>
</dbReference>
<dbReference type="InterPro" id="IPR005823">
    <property type="entry name" value="Ribosomal_uL13_bac-type"/>
</dbReference>
<dbReference type="InterPro" id="IPR023563">
    <property type="entry name" value="Ribosomal_uL13_CS"/>
</dbReference>
<dbReference type="InterPro" id="IPR036899">
    <property type="entry name" value="Ribosomal_uL13_sf"/>
</dbReference>
<dbReference type="NCBIfam" id="TIGR01066">
    <property type="entry name" value="rplM_bact"/>
    <property type="match status" value="1"/>
</dbReference>
<dbReference type="PANTHER" id="PTHR11545:SF2">
    <property type="entry name" value="LARGE RIBOSOMAL SUBUNIT PROTEIN UL13M"/>
    <property type="match status" value="1"/>
</dbReference>
<dbReference type="PANTHER" id="PTHR11545">
    <property type="entry name" value="RIBOSOMAL PROTEIN L13"/>
    <property type="match status" value="1"/>
</dbReference>
<dbReference type="Pfam" id="PF00572">
    <property type="entry name" value="Ribosomal_L13"/>
    <property type="match status" value="1"/>
</dbReference>
<dbReference type="PIRSF" id="PIRSF002181">
    <property type="entry name" value="Ribosomal_L13"/>
    <property type="match status" value="1"/>
</dbReference>
<dbReference type="SUPFAM" id="SSF52161">
    <property type="entry name" value="Ribosomal protein L13"/>
    <property type="match status" value="1"/>
</dbReference>
<dbReference type="PROSITE" id="PS00783">
    <property type="entry name" value="RIBOSOMAL_L13"/>
    <property type="match status" value="1"/>
</dbReference>
<reference key="1">
    <citation type="journal article" date="2011" name="MBio">
        <title>Novel metabolic attributes of the genus Cyanothece, comprising a group of unicellular nitrogen-fixing Cyanobacteria.</title>
        <authorList>
            <person name="Bandyopadhyay A."/>
            <person name="Elvitigala T."/>
            <person name="Welsh E."/>
            <person name="Stockel J."/>
            <person name="Liberton M."/>
            <person name="Min H."/>
            <person name="Sherman L.A."/>
            <person name="Pakrasi H.B."/>
        </authorList>
    </citation>
    <scope>NUCLEOTIDE SEQUENCE [LARGE SCALE GENOMIC DNA]</scope>
    <source>
        <strain>PCC 8801 / RF-1</strain>
    </source>
</reference>
<accession>B7K221</accession>
<proteinExistence type="inferred from homology"/>
<organism>
    <name type="scientific">Rippkaea orientalis (strain PCC 8801 / RF-1)</name>
    <name type="common">Cyanothece sp. (strain PCC 8801)</name>
    <dbReference type="NCBI Taxonomy" id="41431"/>
    <lineage>
        <taxon>Bacteria</taxon>
        <taxon>Bacillati</taxon>
        <taxon>Cyanobacteriota</taxon>
        <taxon>Cyanophyceae</taxon>
        <taxon>Oscillatoriophycideae</taxon>
        <taxon>Chroococcales</taxon>
        <taxon>Aphanothecaceae</taxon>
        <taxon>Rippkaea</taxon>
        <taxon>Rippkaea orientalis</taxon>
    </lineage>
</organism>
<sequence>MNKTITPNPETLDQKWYVIDAADQRLGRLASEVAQILRGKNKPTFTPHMDTGDFVIIVNAEKVVVTGKKSSQKLYRRHSGRPGGMKVETFEKLQARLPERIVEHAVKGMLPKNSLGRKLFTKLKVYTGPTHPHQAQQPETLIVNTIPTGEN</sequence>
<keyword id="KW-1185">Reference proteome</keyword>
<keyword id="KW-0687">Ribonucleoprotein</keyword>
<keyword id="KW-0689">Ribosomal protein</keyword>
<protein>
    <recommendedName>
        <fullName evidence="1">Large ribosomal subunit protein uL13</fullName>
    </recommendedName>
    <alternativeName>
        <fullName evidence="2">50S ribosomal protein L13</fullName>
    </alternativeName>
</protein>
<evidence type="ECO:0000255" key="1">
    <source>
        <dbReference type="HAMAP-Rule" id="MF_01366"/>
    </source>
</evidence>
<evidence type="ECO:0000305" key="2"/>
<gene>
    <name evidence="1" type="primary">rplM</name>
    <name evidence="1" type="synonym">rpl13</name>
    <name type="ordered locus">PCC8801_0225</name>
</gene>
<name>RL13_RIPO1</name>
<comment type="function">
    <text evidence="1">This protein is one of the early assembly proteins of the 50S ribosomal subunit, although it is not seen to bind rRNA by itself. It is important during the early stages of 50S assembly.</text>
</comment>
<comment type="subunit">
    <text evidence="1">Part of the 50S ribosomal subunit.</text>
</comment>
<comment type="similarity">
    <text evidence="1">Belongs to the universal ribosomal protein uL13 family.</text>
</comment>
<feature type="chain" id="PRO_1000144115" description="Large ribosomal subunit protein uL13">
    <location>
        <begin position="1"/>
        <end position="151"/>
    </location>
</feature>